<name>HM34_CAEEL</name>
<comment type="function">
    <text evidence="3 4 5 6">Acts as a transcription regulator (PubMed:20713707). Binds to the sequence motif 5'-TCAGGTT-3' (PubMed:20335356). Binds to the cis-regulatory element of proapoptotic factor egl-1 gene and together with eya-1 activates egl-1 expression to promote motor neuron M4 sister cell apoptosis (PubMed:20713707). Also promotes apoptosis of I1 pharyngeal neuron sister cell (PubMed:20713707). Together with eya-1, required to specify the coelomocyte fate in embryonic and postembryonic precursors (PubMed:19427847, PubMed:20335356). Required to establish and maintain the differentiation of all 14 classes of pharyngeal neurons (PubMed:35324425). Controls the neurotransmitter signaling capacity of the neurons and is required for the expression of some neurotransmitter receptors including mgl-1, glr-2 and ser-7 (PubMed:35324425). Affects the neuropeptidergic identity of pharyngeal neurons (PubMed:35324425). Required for the pharyngeal expression of sensory receptors gur-3, glu-7 and str-97, antimicrobial defense genes such as spp-12, gpla-1/flr-2 and htrl-1, and pan-pharyngeal nervous system genes such as kin-36 (PubMed:35324425). Required to establish and maintain pharyngeal nervous system architecture by ensuring correct axon and synapse organization (PubMed:35324425). Required for expression of eya-1 which may act as a transcriptional cofactor to specify distinct pharyngeal neuron types (PubMed:35324425). Cooperates with several homeobox proteins to specify distinct pharyngeal neuron types including unc-86 in the NSM and I1 neurons, ceh-14 in the I2 neuron, ceh-2 and pros-1 in the I3 neuron, ceh-45 in the M1 neuron, ceh-2 in the M3 neuron, ceh-28 and zag-1 in the M4 neuron, and vab-15 in the M5 neuron (PubMed:35324425).</text>
</comment>
<comment type="subunit">
    <text evidence="3 5">Interacts (via N-terminus) with eya-1 (via C-terminus).</text>
</comment>
<comment type="interaction">
    <interactant intactId="EBI-2413136">
        <id>Q94165</id>
    </interactant>
    <interactant intactId="EBI-311862">
        <id>O17670</id>
        <label>eya-1</label>
    </interactant>
    <organismsDiffer>false</organismsDiffer>
    <experiments>3</experiments>
</comment>
<comment type="subcellular location">
    <subcellularLocation>
        <location evidence="3 5">Nucleus</location>
    </subcellularLocation>
</comment>
<comment type="tissue specificity">
    <text evidence="6">Shows expression only in the pharyngeal nervous system.</text>
</comment>
<comment type="developmental stage">
    <text evidence="3 4 5">Expression starts at the embryonic bean stage and continues throughout larval and adult stages in few anterior body wall muscle cells and in unidentified cells in the head (PubMed:19427847). Expressed predominantly in pharyngeal cells during embryogenesis and throughout larval and adult stages (PubMed:20713707). In L1 larvae, expressed in all pharyngeal neurons (M4, I1, MI, I3, M3, NSM, MC, I2, I4, I5, I6, M1, M2, and M5), some pharyngeal muscle cells (pm1 and pm2) and pharyngeal epithelial cells (e1 and e3), and some body wall muscles around the anterior pharynx (PubMed:20713707). Expressed transiently in the M lineage-derived coelomocyte precursor cells M.dlpa and M.drpa before their differentiation into coelomocytes (PubMed:19427847, PubMed:20335356). Expressed in the M4 motor neuron sister cell (PubMed:20713707).</text>
</comment>
<comment type="disruption phenotype">
    <text evidence="3 5 6">Exhibits early larval arrest phenotype (PubMed:35324425). Does not affect the number of pharyngeal cells or the expression of pan-neuronal genes including ric-4, ric-19 and unc-11 (PubMed:35324425). Several neuron classes fail to acquire their neurotransmitter identity including 7 cholinergic, 4 glutamatergic and 1 serotonergic neuron (PubMed:35324425). Alters the expression of neuropeptidergic genes in pharyngeal neurons including the reduction of glr-2 in M1 neurons and the elimination of mgl-1 in NSM neurons and ser-7 in I2, I4, I5, I6, M2, M3, M4, M5, MC and MI neurons (PubMed:35324425). Abolishes expression of sensory receptors including gur-3, glr-7 and str-97 in the pharyngeal nervous system (PubMed:35324425). Reduces the expression of several neuropeptides and antimicrobial defense genes such as spp-12, flr-2 and htr-1 in pharyngeal neurons (PubMed:35324425). RNAi-mediated knockdown in embryos causes lethal arrest at the embryonic 3-fold stage or at the L1 larval stage with abnormal anterior morphology (PubMed:19427847). The few surviving animals lack 1 or both pairs of embryonic MS lineage-derived coelomocytes as well as the 2 post-embryonic M lineage-derived coelomocytes (PubMed:19427847). RNAi-mediated knockdown in L1 larvae causes the loss of the M lineage-derived coelomocytes due to the abnormal differentiation of coelomocyte precursors M.drpa and M.dlpa into body wall muscle cells (PubMed:19427847). In 38% of animals, the motor neuron M4 sister survived (PubMed:20713707).</text>
</comment>
<comment type="similarity">
    <text evidence="7">Belongs to the SIX/Sine oculis homeobox family.</text>
</comment>
<sequence>MQQSYNPQNSLTATTSYSEQEIVCICESLFNEGLQTGRTEQLANFIYNLPQCYQVMESVLKAQALVYFTTQNWKMLYKLLECSKFSPHNHTVLQNLWLDAHYKEAAKTKDRELGAVCKYRIRKKNPFPNTIWDGEETNYCFKSKSRNVLRDAYKKCQYPSVEDKRRLAQQTELSIIQVSNWFKNKRQRERAAGQLDRSSARSNDSDDGSSGCESKPPMNIDSPAPPPLPTSFDLQPYYPSPYTFAPHCDFSYIQNL</sequence>
<reference key="1">
    <citation type="journal article" date="1998" name="Science">
        <title>Genome sequence of the nematode C. elegans: a platform for investigating biology.</title>
        <authorList>
            <consortium name="The C. elegans sequencing consortium"/>
        </authorList>
    </citation>
    <scope>NUCLEOTIDE SEQUENCE [LARGE SCALE GENOMIC DNA]</scope>
    <source>
        <strain>Bristol N2</strain>
    </source>
</reference>
<reference key="2">
    <citation type="journal article" date="2009" name="Dev. Biol.">
        <title>A conserved Six-Eya cassette acts downstream of Wnt signaling to direct non-myogenic versus myogenic fates in the C. elegans postembryonic mesoderm.</title>
        <authorList>
            <person name="Amin N.M."/>
            <person name="Lim S.E."/>
            <person name="Shi H."/>
            <person name="Chan T.L."/>
            <person name="Liu J."/>
        </authorList>
    </citation>
    <scope>FUNCTION</scope>
    <scope>INTERACTION WITH EYA-1</scope>
    <scope>SUBCELLULAR LOCATION</scope>
    <scope>DEVELOPMENTAL STAGE</scope>
    <scope>DISRUPTION PHENOTYPE</scope>
</reference>
<reference key="3">
    <citation type="journal article" date="2010" name="Development">
        <title>The FoxF/FoxC factor LET-381 directly regulates both cell fate specification and cell differentiation in C. elegans mesoderm development.</title>
        <authorList>
            <person name="Amin N.M."/>
            <person name="Shi H."/>
            <person name="Liu J."/>
        </authorList>
    </citation>
    <scope>FUNCTION</scope>
    <scope>DEVELOPMENTAL STAGE</scope>
</reference>
<reference key="4">
    <citation type="journal article" date="2010" name="Proc. Natl. Acad. Sci. U.S.A.">
        <title>Six and Eya promote apoptosis through direct transcriptional activation of the proapoptotic BH3-only gene egl-1 in Caenorhabditis elegans.</title>
        <authorList>
            <person name="Hirose T."/>
            <person name="Galvin B.D."/>
            <person name="Horvitz H.R."/>
        </authorList>
    </citation>
    <scope>FUNCTION</scope>
    <scope>INTERACTION WITH EYA-1</scope>
    <scope>SUBCELLULAR LOCATION</scope>
    <scope>DEVELOPMENTAL STAGE</scope>
    <scope>DISRUPTION PHENOTYPE</scope>
</reference>
<reference evidence="7" key="5">
    <citation type="journal article" date="2022" name="Elife">
        <title>The enteric nervous system of the C. elegans pharynx is specified by the Sine oculis-like homeobox gene ceh-34.</title>
        <authorList>
            <person name="Vidal B."/>
            <person name="Gulez B."/>
            <person name="Cao W.X."/>
            <person name="Leyva-Diaz E."/>
            <person name="Reilly M.B."/>
            <person name="Tekieli T."/>
            <person name="Hobert O."/>
        </authorList>
    </citation>
    <scope>FUNCTION</scope>
    <scope>TISSUE SPECIFICITY</scope>
    <scope>DISRUPTION PHENOTYPE</scope>
</reference>
<organism>
    <name type="scientific">Caenorhabditis elegans</name>
    <dbReference type="NCBI Taxonomy" id="6239"/>
    <lineage>
        <taxon>Eukaryota</taxon>
        <taxon>Metazoa</taxon>
        <taxon>Ecdysozoa</taxon>
        <taxon>Nematoda</taxon>
        <taxon>Chromadorea</taxon>
        <taxon>Rhabditida</taxon>
        <taxon>Rhabditina</taxon>
        <taxon>Rhabditomorpha</taxon>
        <taxon>Rhabditoidea</taxon>
        <taxon>Rhabditidae</taxon>
        <taxon>Peloderinae</taxon>
        <taxon>Caenorhabditis</taxon>
    </lineage>
</organism>
<dbReference type="EMBL" id="FO080497">
    <property type="protein sequence ID" value="CCD64164.1"/>
    <property type="molecule type" value="Genomic_DNA"/>
</dbReference>
<dbReference type="PIR" id="F89046">
    <property type="entry name" value="F89046"/>
</dbReference>
<dbReference type="RefSeq" id="NP_504419.1">
    <property type="nucleotide sequence ID" value="NM_072018.8"/>
</dbReference>
<dbReference type="SMR" id="Q94165"/>
<dbReference type="BioGRID" id="43968">
    <property type="interactions" value="2"/>
</dbReference>
<dbReference type="FunCoup" id="Q94165">
    <property type="interactions" value="7"/>
</dbReference>
<dbReference type="IntAct" id="Q94165">
    <property type="interactions" value="2"/>
</dbReference>
<dbReference type="STRING" id="6239.C10G8.6.1"/>
<dbReference type="PaxDb" id="6239-C10G8.6"/>
<dbReference type="EnsemblMetazoa" id="C10G8.6.1">
    <property type="protein sequence ID" value="C10G8.6.1"/>
    <property type="gene ID" value="WBGene00000455"/>
</dbReference>
<dbReference type="GeneID" id="178919"/>
<dbReference type="KEGG" id="cel:CELE_C10G8.6"/>
<dbReference type="UCSC" id="C10G8.6">
    <property type="organism name" value="c. elegans"/>
</dbReference>
<dbReference type="AGR" id="WB:WBGene00000455"/>
<dbReference type="CTD" id="178919"/>
<dbReference type="WormBase" id="C10G8.6">
    <property type="protein sequence ID" value="CE20496"/>
    <property type="gene ID" value="WBGene00000455"/>
    <property type="gene designation" value="ceh-34"/>
</dbReference>
<dbReference type="eggNOG" id="KOG0775">
    <property type="taxonomic scope" value="Eukaryota"/>
</dbReference>
<dbReference type="GeneTree" id="ENSGT00940000167410"/>
<dbReference type="HOGENOM" id="CLU_046914_4_0_1"/>
<dbReference type="InParanoid" id="Q94165"/>
<dbReference type="OMA" id="YQSMESA"/>
<dbReference type="OrthoDB" id="3501850at2759"/>
<dbReference type="PhylomeDB" id="Q94165"/>
<dbReference type="PRO" id="PR:Q94165"/>
<dbReference type="Proteomes" id="UP000001940">
    <property type="component" value="Chromosome V"/>
</dbReference>
<dbReference type="Bgee" id="WBGene00000455">
    <property type="expression patterns" value="Expressed in pharyngeal muscle cell (C elegans) and 3 other cell types or tissues"/>
</dbReference>
<dbReference type="GO" id="GO:0005634">
    <property type="term" value="C:nucleus"/>
    <property type="evidence" value="ECO:0000314"/>
    <property type="project" value="WormBase"/>
</dbReference>
<dbReference type="GO" id="GO:0005667">
    <property type="term" value="C:transcription regulator complex"/>
    <property type="evidence" value="ECO:0000318"/>
    <property type="project" value="GO_Central"/>
</dbReference>
<dbReference type="GO" id="GO:0000981">
    <property type="term" value="F:DNA-binding transcription factor activity, RNA polymerase II-specific"/>
    <property type="evidence" value="ECO:0000318"/>
    <property type="project" value="GO_Central"/>
</dbReference>
<dbReference type="GO" id="GO:0000978">
    <property type="term" value="F:RNA polymerase II cis-regulatory region sequence-specific DNA binding"/>
    <property type="evidence" value="ECO:0000318"/>
    <property type="project" value="GO_Central"/>
</dbReference>
<dbReference type="GO" id="GO:0043565">
    <property type="term" value="F:sequence-specific DNA binding"/>
    <property type="evidence" value="ECO:0000314"/>
    <property type="project" value="UniProtKB"/>
</dbReference>
<dbReference type="GO" id="GO:0007501">
    <property type="term" value="P:mesodermal cell fate specification"/>
    <property type="evidence" value="ECO:0000315"/>
    <property type="project" value="WormBase"/>
</dbReference>
<dbReference type="GO" id="GO:1904747">
    <property type="term" value="P:positive regulation of apoptotic process involved in development"/>
    <property type="evidence" value="ECO:0000315"/>
    <property type="project" value="UniProtKB"/>
</dbReference>
<dbReference type="GO" id="GO:0006355">
    <property type="term" value="P:regulation of DNA-templated transcription"/>
    <property type="evidence" value="ECO:0000315"/>
    <property type="project" value="UniProtKB"/>
</dbReference>
<dbReference type="GO" id="GO:0006357">
    <property type="term" value="P:regulation of transcription by RNA polymerase II"/>
    <property type="evidence" value="ECO:0000318"/>
    <property type="project" value="GO_Central"/>
</dbReference>
<dbReference type="CDD" id="cd00086">
    <property type="entry name" value="homeodomain"/>
    <property type="match status" value="1"/>
</dbReference>
<dbReference type="FunFam" id="1.10.10.60:FF:000046">
    <property type="entry name" value="SIX homeobox 3"/>
    <property type="match status" value="1"/>
</dbReference>
<dbReference type="Gene3D" id="1.10.10.60">
    <property type="entry name" value="Homeodomain-like"/>
    <property type="match status" value="1"/>
</dbReference>
<dbReference type="InterPro" id="IPR001356">
    <property type="entry name" value="HD"/>
</dbReference>
<dbReference type="InterPro" id="IPR017970">
    <property type="entry name" value="Homeobox_CS"/>
</dbReference>
<dbReference type="InterPro" id="IPR009057">
    <property type="entry name" value="Homeodomain-like_sf"/>
</dbReference>
<dbReference type="InterPro" id="IPR031701">
    <property type="entry name" value="SIX1_SD"/>
</dbReference>
<dbReference type="PANTHER" id="PTHR10390">
    <property type="entry name" value="HOMEOBOX PROTEIN SIX"/>
    <property type="match status" value="1"/>
</dbReference>
<dbReference type="PANTHER" id="PTHR10390:SF61">
    <property type="entry name" value="HOMEOBOX PROTEIN SIX2"/>
    <property type="match status" value="1"/>
</dbReference>
<dbReference type="Pfam" id="PF00046">
    <property type="entry name" value="Homeodomain"/>
    <property type="match status" value="1"/>
</dbReference>
<dbReference type="Pfam" id="PF16878">
    <property type="entry name" value="SIX1_SD"/>
    <property type="match status" value="1"/>
</dbReference>
<dbReference type="SMART" id="SM00389">
    <property type="entry name" value="HOX"/>
    <property type="match status" value="1"/>
</dbReference>
<dbReference type="SUPFAM" id="SSF46689">
    <property type="entry name" value="Homeodomain-like"/>
    <property type="match status" value="1"/>
</dbReference>
<dbReference type="PROSITE" id="PS00027">
    <property type="entry name" value="HOMEOBOX_1"/>
    <property type="match status" value="1"/>
</dbReference>
<dbReference type="PROSITE" id="PS50071">
    <property type="entry name" value="HOMEOBOX_2"/>
    <property type="match status" value="1"/>
</dbReference>
<accession>Q94165</accession>
<feature type="chain" id="PRO_0000049000" description="Homeobox protein ceh-34">
    <location>
        <begin position="1"/>
        <end position="256"/>
    </location>
</feature>
<feature type="DNA-binding region" description="Homeobox" evidence="1">
    <location>
        <begin position="134"/>
        <end position="193"/>
    </location>
</feature>
<feature type="region of interest" description="Disordered" evidence="2">
    <location>
        <begin position="187"/>
        <end position="233"/>
    </location>
</feature>
<evidence type="ECO:0000255" key="1">
    <source>
        <dbReference type="PROSITE-ProRule" id="PRU00108"/>
    </source>
</evidence>
<evidence type="ECO:0000256" key="2">
    <source>
        <dbReference type="SAM" id="MobiDB-lite"/>
    </source>
</evidence>
<evidence type="ECO:0000269" key="3">
    <source>
    </source>
</evidence>
<evidence type="ECO:0000269" key="4">
    <source>
    </source>
</evidence>
<evidence type="ECO:0000269" key="5">
    <source>
    </source>
</evidence>
<evidence type="ECO:0000269" key="6">
    <source>
    </source>
</evidence>
<evidence type="ECO:0000305" key="7"/>
<keyword id="KW-0217">Developmental protein</keyword>
<keyword id="KW-0238">DNA-binding</keyword>
<keyword id="KW-0371">Homeobox</keyword>
<keyword id="KW-0539">Nucleus</keyword>
<keyword id="KW-1185">Reference proteome</keyword>
<keyword id="KW-0804">Transcription</keyword>
<keyword id="KW-0805">Transcription regulation</keyword>
<protein>
    <recommendedName>
        <fullName>Homeobox protein ceh-34</fullName>
    </recommendedName>
</protein>
<proteinExistence type="evidence at protein level"/>
<gene>
    <name type="primary">ceh-34</name>
    <name type="ORF">C10G8.6</name>
</gene>